<gene>
    <name evidence="1 4" type="primary">rnfD</name>
    <name evidence="4" type="ordered locus">CLJU_c11370</name>
</gene>
<reference key="1">
    <citation type="journal article" date="2010" name="Proc. Natl. Acad. Sci. U.S.A.">
        <title>Clostridium ljungdahlii represents a microbial production platform based on syngas.</title>
        <authorList>
            <person name="Kopke M."/>
            <person name="Held C."/>
            <person name="Hujer S."/>
            <person name="Liesegang H."/>
            <person name="Wiezer A."/>
            <person name="Wollherr A."/>
            <person name="Ehrenreich A."/>
            <person name="Liebl W."/>
            <person name="Gottschalk G."/>
            <person name="Durre P."/>
        </authorList>
    </citation>
    <scope>NUCLEOTIDE SEQUENCE [LARGE SCALE GENOMIC DNA]</scope>
    <source>
        <strain>ATCC 55383 / DSM 13528 / PETC</strain>
    </source>
</reference>
<reference key="2">
    <citation type="journal article" date="2012" name="MBio">
        <title>The Rnf complex of Clostridium ljungdahlii is a proton-translocating ferredoxin:NAD+ oxidoreductase essential for autotrophic growth.</title>
        <authorList>
            <person name="Tremblay P.L."/>
            <person name="Zhang T."/>
            <person name="Dar S.A."/>
            <person name="Leang C."/>
            <person name="Lovley D.R."/>
        </authorList>
    </citation>
    <scope>FUNCTION</scope>
    <scope>INDUCTION</scope>
    <source>
        <strain>ATCC 55383 / DSM 13528 / PETC</strain>
    </source>
</reference>
<keyword id="KW-1003">Cell membrane</keyword>
<keyword id="KW-0249">Electron transport</keyword>
<keyword id="KW-0285">Flavoprotein</keyword>
<keyword id="KW-0288">FMN</keyword>
<keyword id="KW-0472">Membrane</keyword>
<keyword id="KW-0520">NAD</keyword>
<keyword id="KW-0597">Phosphoprotein</keyword>
<keyword id="KW-1278">Translocase</keyword>
<keyword id="KW-0812">Transmembrane</keyword>
<keyword id="KW-1133">Transmembrane helix</keyword>
<keyword id="KW-0813">Transport</keyword>
<name>RNFD_CLOLD</name>
<accession>D8GR67</accession>
<protein>
    <recommendedName>
        <fullName evidence="3">Proton-translocating ferredoxin:NAD(+) oxidoreductase complex subunit D</fullName>
        <ecNumber evidence="1 2">7.1.1.-</ecNumber>
    </recommendedName>
    <alternativeName>
        <fullName evidence="1 3">Rnf electron transport complex subunit D</fullName>
    </alternativeName>
</protein>
<organism>
    <name type="scientific">Clostridium ljungdahlii (strain ATCC 55383 / DSM 13528 / PETC)</name>
    <dbReference type="NCBI Taxonomy" id="748727"/>
    <lineage>
        <taxon>Bacteria</taxon>
        <taxon>Bacillati</taxon>
        <taxon>Bacillota</taxon>
        <taxon>Clostridia</taxon>
        <taxon>Eubacteriales</taxon>
        <taxon>Clostridiaceae</taxon>
        <taxon>Clostridium</taxon>
    </lineage>
</organism>
<sequence length="331" mass="35268">MAEAQIKKNIFTISSSPHVRCDESVSKIMWSVCLALTPAAVFGVFNFGIHALEVIITGIIAAVVTEYFVEKVRNKPITITDGSAFLTGLLLSMCLPPDIPPYMVAIGSFIAIAIAKHSMGGLGQNIFNPAHIGRAALMVSWPVAMTTWSKLSASGVDAVTTATPLGILKLQGYSKLLETFGGQGALYKAMFLGTRNGSIGETSTILLVLGGLYLIYKKYINWQIPVVMIGTVGILTWAFGGTTGIFTGDPVFHMMAGGLVIGAFFMATDMVTIPMTIKGQIIFALGAGALTSLIRLKGGYPEGVCYSILLMNAVTPLIDKFTQPVKFGTRR</sequence>
<feature type="chain" id="PRO_0000443491" description="Proton-translocating ferredoxin:NAD(+) oxidoreductase complex subunit D">
    <location>
        <begin position="1"/>
        <end position="331"/>
    </location>
</feature>
<feature type="transmembrane region" description="Helical" evidence="1">
    <location>
        <begin position="23"/>
        <end position="43"/>
    </location>
</feature>
<feature type="transmembrane region" description="Helical" evidence="1">
    <location>
        <begin position="44"/>
        <end position="64"/>
    </location>
</feature>
<feature type="transmembrane region" description="Helical" evidence="1">
    <location>
        <begin position="84"/>
        <end position="106"/>
    </location>
</feature>
<feature type="transmembrane region" description="Helical" evidence="1">
    <location>
        <begin position="196"/>
        <end position="216"/>
    </location>
</feature>
<feature type="transmembrane region" description="Helical" evidence="1">
    <location>
        <begin position="226"/>
        <end position="246"/>
    </location>
</feature>
<feature type="transmembrane region" description="Helical" evidence="1">
    <location>
        <begin position="251"/>
        <end position="271"/>
    </location>
</feature>
<feature type="transmembrane region" description="Helical" evidence="1">
    <location>
        <begin position="273"/>
        <end position="293"/>
    </location>
</feature>
<feature type="modified residue" description="FMN phosphoryl threonine" evidence="1">
    <location>
        <position position="163"/>
    </location>
</feature>
<evidence type="ECO:0000255" key="1">
    <source>
        <dbReference type="HAMAP-Rule" id="MF_00462"/>
    </source>
</evidence>
<evidence type="ECO:0000269" key="2">
    <source>
    </source>
</evidence>
<evidence type="ECO:0000305" key="3"/>
<evidence type="ECO:0000312" key="4">
    <source>
        <dbReference type="EMBL" id="ADK14205.1"/>
    </source>
</evidence>
<proteinExistence type="evidence at transcript level"/>
<dbReference type="EC" id="7.1.1.-" evidence="1 2"/>
<dbReference type="EMBL" id="CP001666">
    <property type="protein sequence ID" value="ADK14205.1"/>
    <property type="molecule type" value="Genomic_DNA"/>
</dbReference>
<dbReference type="RefSeq" id="WP_013237802.1">
    <property type="nucleotide sequence ID" value="NZ_LITS01000015.1"/>
</dbReference>
<dbReference type="SMR" id="D8GR67"/>
<dbReference type="STRING" id="748727.CLJU_c11370"/>
<dbReference type="KEGG" id="clj:CLJU_c11370"/>
<dbReference type="PATRIC" id="fig|748727.19.peg.4235"/>
<dbReference type="eggNOG" id="COG4658">
    <property type="taxonomic scope" value="Bacteria"/>
</dbReference>
<dbReference type="HOGENOM" id="CLU_042020_1_0_9"/>
<dbReference type="OrthoDB" id="9776359at2"/>
<dbReference type="BRENDA" id="7.1.1.11">
    <property type="organism ID" value="12866"/>
</dbReference>
<dbReference type="Proteomes" id="UP000001656">
    <property type="component" value="Chromosome"/>
</dbReference>
<dbReference type="GO" id="GO:0005886">
    <property type="term" value="C:plasma membrane"/>
    <property type="evidence" value="ECO:0007669"/>
    <property type="project" value="UniProtKB-SubCell"/>
</dbReference>
<dbReference type="GO" id="GO:0022900">
    <property type="term" value="P:electron transport chain"/>
    <property type="evidence" value="ECO:0007669"/>
    <property type="project" value="UniProtKB-UniRule"/>
</dbReference>
<dbReference type="GO" id="GO:0055085">
    <property type="term" value="P:transmembrane transport"/>
    <property type="evidence" value="ECO:0007669"/>
    <property type="project" value="InterPro"/>
</dbReference>
<dbReference type="HAMAP" id="MF_00462">
    <property type="entry name" value="RsxD_RnfD"/>
    <property type="match status" value="1"/>
</dbReference>
<dbReference type="InterPro" id="IPR004338">
    <property type="entry name" value="NqrB/RnfD"/>
</dbReference>
<dbReference type="InterPro" id="IPR011303">
    <property type="entry name" value="RnfD_bac"/>
</dbReference>
<dbReference type="NCBIfam" id="TIGR01946">
    <property type="entry name" value="rnfD"/>
    <property type="match status" value="1"/>
</dbReference>
<dbReference type="PANTHER" id="PTHR30578">
    <property type="entry name" value="ELECTRON TRANSPORT COMPLEX PROTEIN RNFD"/>
    <property type="match status" value="1"/>
</dbReference>
<dbReference type="PANTHER" id="PTHR30578:SF0">
    <property type="entry name" value="ION-TRANSLOCATING OXIDOREDUCTASE COMPLEX SUBUNIT D"/>
    <property type="match status" value="1"/>
</dbReference>
<dbReference type="Pfam" id="PF03116">
    <property type="entry name" value="NQR2_RnfD_RnfE"/>
    <property type="match status" value="1"/>
</dbReference>
<comment type="function">
    <text evidence="2">Part of a membrane-bound complex that couples electron transfer with translocation of ions across the membrane. Couples electron transfer from reduced ferredoxin to NAD(+) with translocation of H(+) out of the cell. Essential for energy conservation during autotrophic growth. Contributes to ATP synthesis during heterotrophic growth.</text>
</comment>
<comment type="cofactor">
    <cofactor evidence="1">
        <name>FMN</name>
        <dbReference type="ChEBI" id="CHEBI:58210"/>
    </cofactor>
</comment>
<comment type="subunit">
    <text evidence="1">The complex is composed of six subunits: RnfA, RnfB, RnfC, RnfD, RnfE and RnfG.</text>
</comment>
<comment type="subcellular location">
    <subcellularLocation>
        <location evidence="1">Cell membrane</location>
        <topology evidence="1">Multi-pass membrane protein</topology>
    </subcellularLocation>
</comment>
<comment type="induction">
    <text evidence="2">Up-regulated when grown on H(2)-CO(2).</text>
</comment>
<comment type="similarity">
    <text evidence="1">Belongs to the NqrB/RnfD family.</text>
</comment>